<reference key="1">
    <citation type="journal article" date="2008" name="Chem. Biol. Interact.">
        <title>Extending the Bacillus cereus group genomics to putative food-borne pathogens of different toxicity.</title>
        <authorList>
            <person name="Lapidus A."/>
            <person name="Goltsman E."/>
            <person name="Auger S."/>
            <person name="Galleron N."/>
            <person name="Segurens B."/>
            <person name="Dossat C."/>
            <person name="Land M.L."/>
            <person name="Broussolle V."/>
            <person name="Brillard J."/>
            <person name="Guinebretiere M.-H."/>
            <person name="Sanchis V."/>
            <person name="Nguen-the C."/>
            <person name="Lereclus D."/>
            <person name="Richardson P."/>
            <person name="Wincker P."/>
            <person name="Weissenbach J."/>
            <person name="Ehrlich S.D."/>
            <person name="Sorokin A."/>
        </authorList>
    </citation>
    <scope>NUCLEOTIDE SEQUENCE [LARGE SCALE GENOMIC DNA]</scope>
    <source>
        <strain>KBAB4</strain>
    </source>
</reference>
<keyword id="KW-0963">Cytoplasm</keyword>
<keyword id="KW-0378">Hydrolase</keyword>
<keyword id="KW-0540">Nuclease</keyword>
<keyword id="KW-0690">Ribosome biogenesis</keyword>
<sequence length="137" mass="15349">MRILGLDVGTKTVGVAMSDEMGWTAQGLETIRINEERGHFGFDRISELVKQYNVDKIVVGLPKNMNGTIGPRGEACQQFAENLRNLLQLEVVMWDERLSTMAAERLLISADVSRKKRKQVIDKMAAVVILQGFLDSK</sequence>
<proteinExistence type="inferred from homology"/>
<protein>
    <recommendedName>
        <fullName evidence="1">Putative pre-16S rRNA nuclease</fullName>
        <ecNumber evidence="1">3.1.-.-</ecNumber>
    </recommendedName>
</protein>
<evidence type="ECO:0000255" key="1">
    <source>
        <dbReference type="HAMAP-Rule" id="MF_00651"/>
    </source>
</evidence>
<feature type="chain" id="PRO_1000130999" description="Putative pre-16S rRNA nuclease">
    <location>
        <begin position="1"/>
        <end position="137"/>
    </location>
</feature>
<gene>
    <name type="ordered locus">BcerKBAB4_4233</name>
</gene>
<dbReference type="EC" id="3.1.-.-" evidence="1"/>
<dbReference type="EMBL" id="CP000903">
    <property type="protein sequence ID" value="ABY45392.1"/>
    <property type="molecule type" value="Genomic_DNA"/>
</dbReference>
<dbReference type="SMR" id="A9VI07"/>
<dbReference type="KEGG" id="bwe:BcerKBAB4_4233"/>
<dbReference type="eggNOG" id="COG0816">
    <property type="taxonomic scope" value="Bacteria"/>
</dbReference>
<dbReference type="HOGENOM" id="CLU_098240_2_0_9"/>
<dbReference type="Proteomes" id="UP000002154">
    <property type="component" value="Chromosome"/>
</dbReference>
<dbReference type="GO" id="GO:0005829">
    <property type="term" value="C:cytosol"/>
    <property type="evidence" value="ECO:0007669"/>
    <property type="project" value="TreeGrafter"/>
</dbReference>
<dbReference type="GO" id="GO:0004518">
    <property type="term" value="F:nuclease activity"/>
    <property type="evidence" value="ECO:0007669"/>
    <property type="project" value="UniProtKB-KW"/>
</dbReference>
<dbReference type="GO" id="GO:0000967">
    <property type="term" value="P:rRNA 5'-end processing"/>
    <property type="evidence" value="ECO:0007669"/>
    <property type="project" value="UniProtKB-UniRule"/>
</dbReference>
<dbReference type="CDD" id="cd16964">
    <property type="entry name" value="YqgF"/>
    <property type="match status" value="1"/>
</dbReference>
<dbReference type="FunFam" id="3.30.420.140:FF:000003">
    <property type="entry name" value="Putative pre-16S rRNA nuclease"/>
    <property type="match status" value="1"/>
</dbReference>
<dbReference type="Gene3D" id="3.30.420.140">
    <property type="entry name" value="YqgF/RNase H-like domain"/>
    <property type="match status" value="1"/>
</dbReference>
<dbReference type="HAMAP" id="MF_00651">
    <property type="entry name" value="Nuclease_YqgF"/>
    <property type="match status" value="1"/>
</dbReference>
<dbReference type="InterPro" id="IPR012337">
    <property type="entry name" value="RNaseH-like_sf"/>
</dbReference>
<dbReference type="InterPro" id="IPR005227">
    <property type="entry name" value="YqgF"/>
</dbReference>
<dbReference type="InterPro" id="IPR006641">
    <property type="entry name" value="YqgF/RNaseH-like_dom"/>
</dbReference>
<dbReference type="InterPro" id="IPR037027">
    <property type="entry name" value="YqgF/RNaseH-like_dom_sf"/>
</dbReference>
<dbReference type="NCBIfam" id="TIGR00250">
    <property type="entry name" value="RNAse_H_YqgF"/>
    <property type="match status" value="1"/>
</dbReference>
<dbReference type="PANTHER" id="PTHR33317">
    <property type="entry name" value="POLYNUCLEOTIDYL TRANSFERASE, RIBONUCLEASE H-LIKE SUPERFAMILY PROTEIN"/>
    <property type="match status" value="1"/>
</dbReference>
<dbReference type="PANTHER" id="PTHR33317:SF4">
    <property type="entry name" value="POLYNUCLEOTIDYL TRANSFERASE, RIBONUCLEASE H-LIKE SUPERFAMILY PROTEIN"/>
    <property type="match status" value="1"/>
</dbReference>
<dbReference type="Pfam" id="PF03652">
    <property type="entry name" value="RuvX"/>
    <property type="match status" value="1"/>
</dbReference>
<dbReference type="SMART" id="SM00732">
    <property type="entry name" value="YqgFc"/>
    <property type="match status" value="1"/>
</dbReference>
<dbReference type="SUPFAM" id="SSF53098">
    <property type="entry name" value="Ribonuclease H-like"/>
    <property type="match status" value="1"/>
</dbReference>
<comment type="function">
    <text evidence="1">Could be a nuclease involved in processing of the 5'-end of pre-16S rRNA.</text>
</comment>
<comment type="subcellular location">
    <subcellularLocation>
        <location evidence="1">Cytoplasm</location>
    </subcellularLocation>
</comment>
<comment type="similarity">
    <text evidence="1">Belongs to the YqgF nuclease family.</text>
</comment>
<accession>A9VI07</accession>
<name>YQGF_BACMK</name>
<organism>
    <name type="scientific">Bacillus mycoides (strain KBAB4)</name>
    <name type="common">Bacillus weihenstephanensis</name>
    <dbReference type="NCBI Taxonomy" id="315730"/>
    <lineage>
        <taxon>Bacteria</taxon>
        <taxon>Bacillati</taxon>
        <taxon>Bacillota</taxon>
        <taxon>Bacilli</taxon>
        <taxon>Bacillales</taxon>
        <taxon>Bacillaceae</taxon>
        <taxon>Bacillus</taxon>
        <taxon>Bacillus cereus group</taxon>
    </lineage>
</organism>